<keyword id="KW-0002">3D-structure</keyword>
<keyword id="KW-0028">Amino-acid biosynthesis</keyword>
<keyword id="KW-0457">Lysine biosynthesis</keyword>
<keyword id="KW-0521">NADP</keyword>
<keyword id="KW-0560">Oxidoreductase</keyword>
<keyword id="KW-1185">Reference proteome</keyword>
<reference key="1">
    <citation type="journal article" date="2000" name="Acta Crystallogr. D">
        <title>Cloning, expression, purification and crystallization of saccharopine reductase from Magnaporthe grisea.</title>
        <authorList>
            <person name="Johansson E."/>
            <person name="Steffens J.J."/>
            <person name="Emptage M."/>
            <person name="Lindqvist Y."/>
            <person name="Schneider G."/>
        </authorList>
    </citation>
    <scope>NUCLEOTIDE SEQUENCE [GENOMIC DNA]</scope>
    <scope>CRYSTALLIZATION</scope>
    <source>
        <strain>4091-5-8</strain>
    </source>
</reference>
<reference key="2">
    <citation type="journal article" date="2005" name="Nature">
        <title>The genome sequence of the rice blast fungus Magnaporthe grisea.</title>
        <authorList>
            <person name="Dean R.A."/>
            <person name="Talbot N.J."/>
            <person name="Ebbole D.J."/>
            <person name="Farman M.L."/>
            <person name="Mitchell T.K."/>
            <person name="Orbach M.J."/>
            <person name="Thon M.R."/>
            <person name="Kulkarni R."/>
            <person name="Xu J.-R."/>
            <person name="Pan H."/>
            <person name="Read N.D."/>
            <person name="Lee Y.-H."/>
            <person name="Carbone I."/>
            <person name="Brown D."/>
            <person name="Oh Y.Y."/>
            <person name="Donofrio N."/>
            <person name="Jeong J.S."/>
            <person name="Soanes D.M."/>
            <person name="Djonovic S."/>
            <person name="Kolomiets E."/>
            <person name="Rehmeyer C."/>
            <person name="Li W."/>
            <person name="Harding M."/>
            <person name="Kim S."/>
            <person name="Lebrun M.-H."/>
            <person name="Bohnert H."/>
            <person name="Coughlan S."/>
            <person name="Butler J."/>
            <person name="Calvo S.E."/>
            <person name="Ma L.-J."/>
            <person name="Nicol R."/>
            <person name="Purcell S."/>
            <person name="Nusbaum C."/>
            <person name="Galagan J.E."/>
            <person name="Birren B.W."/>
        </authorList>
    </citation>
    <scope>NUCLEOTIDE SEQUENCE [LARGE SCALE GENOMIC DNA]</scope>
    <source>
        <strain>70-15 / ATCC MYA-4617 / FGSC 8958</strain>
    </source>
</reference>
<reference evidence="3 4 5" key="3">
    <citation type="journal article" date="2000" name="Structure">
        <title>Crystal structure of saccharopine reductase from Magnaporthe grisea, an enzyme of the alpha-aminoadipate pathway of lysine biosynthesis.</title>
        <authorList>
            <person name="Johansson E."/>
            <person name="Steffens J.J."/>
            <person name="Lindqvist Y."/>
            <person name="Schneider G."/>
        </authorList>
    </citation>
    <scope>X-RAY CRYSTALLOGRAPHY (2.00 ANGSTROMS) IN COMPLEX WITH L-SACCHAROPINE AND NADP</scope>
</reference>
<organism>
    <name type="scientific">Pyricularia oryzae (strain 70-15 / ATCC MYA-4617 / FGSC 8958)</name>
    <name type="common">Rice blast fungus</name>
    <name type="synonym">Magnaporthe oryzae</name>
    <dbReference type="NCBI Taxonomy" id="242507"/>
    <lineage>
        <taxon>Eukaryota</taxon>
        <taxon>Fungi</taxon>
        <taxon>Dikarya</taxon>
        <taxon>Ascomycota</taxon>
        <taxon>Pezizomycotina</taxon>
        <taxon>Sordariomycetes</taxon>
        <taxon>Sordariomycetidae</taxon>
        <taxon>Magnaporthales</taxon>
        <taxon>Pyriculariaceae</taxon>
        <taxon>Pyricularia</taxon>
    </lineage>
</organism>
<protein>
    <recommendedName>
        <fullName>Saccharopine dehydrogenase [NADP(+), L-glutamate-forming]</fullName>
        <ecNumber>1.5.1.10</ecNumber>
    </recommendedName>
    <alternativeName>
        <fullName>Saccharopine reductase</fullName>
    </alternativeName>
</protein>
<feature type="chain" id="PRO_0000212838" description="Saccharopine dehydrogenase [NADP(+), L-glutamate-forming]">
    <location>
        <begin position="1"/>
        <end position="450"/>
    </location>
</feature>
<feature type="binding site" evidence="1 4">
    <location>
        <begin position="11"/>
        <end position="14"/>
    </location>
    <ligand>
        <name>NADP(+)</name>
        <dbReference type="ChEBI" id="CHEBI:58349"/>
    </ligand>
</feature>
<feature type="binding site" evidence="1 4">
    <location>
        <begin position="33"/>
        <end position="35"/>
    </location>
    <ligand>
        <name>NADP(+)</name>
        <dbReference type="ChEBI" id="CHEBI:58349"/>
    </ligand>
</feature>
<feature type="binding site" evidence="1 4">
    <location>
        <begin position="55"/>
        <end position="56"/>
    </location>
    <ligand>
        <name>NADP(+)</name>
        <dbReference type="ChEBI" id="CHEBI:58349"/>
    </ligand>
</feature>
<feature type="binding site" evidence="1 4">
    <location>
        <position position="76"/>
    </location>
    <ligand>
        <name>NADP(+)</name>
        <dbReference type="ChEBI" id="CHEBI:58349"/>
    </ligand>
</feature>
<feature type="binding site" evidence="1 4">
    <location>
        <begin position="98"/>
        <end position="99"/>
    </location>
    <ligand>
        <name>NADP(+)</name>
        <dbReference type="ChEBI" id="CHEBI:58349"/>
    </ligand>
</feature>
<feature type="binding site" evidence="1 4">
    <location>
        <begin position="99"/>
        <end position="100"/>
    </location>
    <ligand>
        <name>L-saccharopine</name>
        <dbReference type="ChEBI" id="CHEBI:57951"/>
    </ligand>
</feature>
<feature type="binding site" evidence="1 4">
    <location>
        <begin position="125"/>
        <end position="127"/>
    </location>
    <ligand>
        <name>NADP(+)</name>
        <dbReference type="ChEBI" id="CHEBI:58349"/>
    </ligand>
</feature>
<feature type="binding site" evidence="1 4">
    <location>
        <position position="126"/>
    </location>
    <ligand>
        <name>L-saccharopine</name>
        <dbReference type="ChEBI" id="CHEBI:57951"/>
    </ligand>
</feature>
<feature type="binding site" evidence="1 4">
    <location>
        <position position="175"/>
    </location>
    <ligand>
        <name>NADP(+)</name>
        <dbReference type="ChEBI" id="CHEBI:58349"/>
    </ligand>
</feature>
<feature type="binding site" evidence="1 4">
    <location>
        <position position="224"/>
    </location>
    <ligand>
        <name>L-saccharopine</name>
        <dbReference type="ChEBI" id="CHEBI:57951"/>
    </ligand>
</feature>
<feature type="binding site" evidence="1 4">
    <location>
        <begin position="245"/>
        <end position="247"/>
    </location>
    <ligand>
        <name>L-saccharopine</name>
        <dbReference type="ChEBI" id="CHEBI:57951"/>
    </ligand>
</feature>
<feature type="sequence variant" description="In strain: 4091-5-8.">
    <original>E</original>
    <variation>G</variation>
    <location>
        <position position="140"/>
    </location>
</feature>
<feature type="sequence variant" description="In strain: 4091-5-8.">
    <original>L</original>
    <variation>F</variation>
    <location>
        <position position="398"/>
    </location>
</feature>
<feature type="strand" evidence="7">
    <location>
        <begin position="5"/>
        <end position="9"/>
    </location>
</feature>
<feature type="helix" evidence="7">
    <location>
        <begin position="15"/>
        <end position="23"/>
    </location>
</feature>
<feature type="turn" evidence="7">
    <location>
        <begin position="24"/>
        <end position="26"/>
    </location>
</feature>
<feature type="strand" evidence="7">
    <location>
        <begin position="28"/>
        <end position="35"/>
    </location>
</feature>
<feature type="helix" evidence="7">
    <location>
        <begin position="36"/>
        <end position="41"/>
    </location>
</feature>
<feature type="turn" evidence="7">
    <location>
        <begin position="42"/>
        <end position="45"/>
    </location>
</feature>
<feature type="strand" evidence="7">
    <location>
        <begin position="49"/>
        <end position="53"/>
    </location>
</feature>
<feature type="helix" evidence="7">
    <location>
        <begin position="59"/>
        <end position="66"/>
    </location>
</feature>
<feature type="strand" evidence="7">
    <location>
        <begin position="69"/>
        <end position="74"/>
    </location>
</feature>
<feature type="helix" evidence="6">
    <location>
        <begin position="78"/>
        <end position="80"/>
    </location>
</feature>
<feature type="helix" evidence="7">
    <location>
        <begin position="81"/>
        <end position="91"/>
    </location>
</feature>
<feature type="strand" evidence="7">
    <location>
        <begin position="94"/>
        <end position="99"/>
    </location>
</feature>
<feature type="helix" evidence="7">
    <location>
        <begin position="103"/>
        <end position="107"/>
    </location>
</feature>
<feature type="helix" evidence="7">
    <location>
        <begin position="109"/>
        <end position="114"/>
    </location>
</feature>
<feature type="strand" evidence="7">
    <location>
        <begin position="118"/>
        <end position="120"/>
    </location>
</feature>
<feature type="turn" evidence="7">
    <location>
        <begin position="125"/>
        <end position="127"/>
    </location>
</feature>
<feature type="helix" evidence="7">
    <location>
        <begin position="129"/>
        <end position="143"/>
    </location>
</feature>
<feature type="strand" evidence="7">
    <location>
        <begin position="147"/>
        <end position="159"/>
    </location>
</feature>
<feature type="helix" evidence="7">
    <location>
        <begin position="161"/>
        <end position="163"/>
    </location>
</feature>
<feature type="strand" evidence="6">
    <location>
        <begin position="172"/>
        <end position="174"/>
    </location>
</feature>
<feature type="helix" evidence="7">
    <location>
        <begin position="176"/>
        <end position="182"/>
    </location>
</feature>
<feature type="strand" evidence="7">
    <location>
        <begin position="187"/>
        <end position="191"/>
    </location>
</feature>
<feature type="strand" evidence="7">
    <location>
        <begin position="194"/>
        <end position="198"/>
    </location>
</feature>
<feature type="helix" evidence="7">
    <location>
        <begin position="201"/>
        <end position="205"/>
    </location>
</feature>
<feature type="strand" evidence="7">
    <location>
        <begin position="218"/>
        <end position="222"/>
    </location>
</feature>
<feature type="helix" evidence="7">
    <location>
        <begin position="229"/>
        <end position="232"/>
    </location>
</feature>
<feature type="strand" evidence="7">
    <location>
        <begin position="239"/>
        <end position="248"/>
    </location>
</feature>
<feature type="helix" evidence="7">
    <location>
        <begin position="251"/>
        <end position="260"/>
    </location>
</feature>
<feature type="turn" evidence="7">
    <location>
        <begin position="261"/>
        <end position="264"/>
    </location>
</feature>
<feature type="helix" evidence="7">
    <location>
        <begin position="270"/>
        <end position="272"/>
    </location>
</feature>
<feature type="helix" evidence="7">
    <location>
        <begin position="278"/>
        <end position="286"/>
    </location>
</feature>
<feature type="strand" evidence="7">
    <location>
        <begin position="289"/>
        <end position="292"/>
    </location>
</feature>
<feature type="helix" evidence="7">
    <location>
        <begin position="293"/>
        <end position="303"/>
    </location>
</feature>
<feature type="helix" evidence="7">
    <location>
        <begin position="309"/>
        <end position="322"/>
    </location>
</feature>
<feature type="turn" evidence="7">
    <location>
        <begin position="323"/>
        <end position="325"/>
    </location>
</feature>
<feature type="strand" evidence="6">
    <location>
        <begin position="326"/>
        <end position="329"/>
    </location>
</feature>
<feature type="helix" evidence="7">
    <location>
        <begin position="336"/>
        <end position="347"/>
    </location>
</feature>
<feature type="strand" evidence="7">
    <location>
        <begin position="356"/>
        <end position="367"/>
    </location>
</feature>
<feature type="strand" evidence="7">
    <location>
        <begin position="373"/>
        <end position="383"/>
    </location>
</feature>
<feature type="strand" evidence="7">
    <location>
        <begin position="389"/>
        <end position="391"/>
    </location>
</feature>
<feature type="helix" evidence="7">
    <location>
        <begin position="394"/>
        <end position="411"/>
    </location>
</feature>
<feature type="strand" evidence="7">
    <location>
        <begin position="419"/>
        <end position="421"/>
    </location>
</feature>
<feature type="helix" evidence="7">
    <location>
        <begin position="426"/>
        <end position="440"/>
    </location>
</feature>
<feature type="strand" evidence="7">
    <location>
        <begin position="445"/>
        <end position="449"/>
    </location>
</feature>
<proteinExistence type="evidence at protein level"/>
<name>LYS9_PYRO7</name>
<accession>Q9P4R4</accession>
<accession>A4QYG4</accession>
<accession>G4N642</accession>
<comment type="catalytic activity">
    <reaction>
        <text>L-saccharopine + NADP(+) + H2O = (S)-2-amino-6-oxohexanoate + L-glutamate + NADPH + H(+)</text>
        <dbReference type="Rhea" id="RHEA:10020"/>
        <dbReference type="ChEBI" id="CHEBI:15377"/>
        <dbReference type="ChEBI" id="CHEBI:15378"/>
        <dbReference type="ChEBI" id="CHEBI:29985"/>
        <dbReference type="ChEBI" id="CHEBI:57783"/>
        <dbReference type="ChEBI" id="CHEBI:57951"/>
        <dbReference type="ChEBI" id="CHEBI:58321"/>
        <dbReference type="ChEBI" id="CHEBI:58349"/>
        <dbReference type="EC" id="1.5.1.10"/>
    </reaction>
</comment>
<comment type="pathway">
    <text>Amino-acid biosynthesis; L-lysine biosynthesis via AAA pathway; L-lysine from L-alpha-aminoadipate (fungal route): step 2/3.</text>
</comment>
<comment type="subunit">
    <text>Homodimer.</text>
</comment>
<comment type="similarity">
    <text evidence="2">Belongs to the saccharopine dehydrogenase family.</text>
</comment>
<gene>
    <name type="primary">LYS3</name>
    <name type="ORF">MGG_08564</name>
</gene>
<sequence length="450" mass="49097">MATKSVLMLGSGFVTRPTLDVLTDSGIKVTVACRTLESAKKLSAGVQHSTPISLDVNDDAALDAEVAKHDLVISLIPYTFHATVIKSAIRQKKHVVTTSYVSPAMMELDQAAKDAGITVMNEIGLDPGIDHLYAIKTIEEVHAAGGKIKTFLSYCGGLPAPESSDNPLGYKFSWSSRGVLLALRNAASFYKDGKVTNVAGPELMATAKPYFIYPGFAFVAYPNRDSTPYKERYQIPEADNIVRGTLRYQGFPQFIKVLVDIGFLSDEEQPFLKEAIPWKEATQKIVKASSASEQDIVSTIVSNATFESTEEQKRIVAGLKWLGIFSDKKITPRGNALDTLCATLEEKMQFEEGERDLVMLQHKFEIENKDGSRETRTSSLCEYGAPIGSGGYSAMAKLVGVPCAVAVKFVLDGTISDRGVLAPMNSKINDPLMKELKEKYGIECKEKVVA</sequence>
<evidence type="ECO:0000269" key="1">
    <source>
    </source>
</evidence>
<evidence type="ECO:0000305" key="2"/>
<evidence type="ECO:0007744" key="3">
    <source>
        <dbReference type="PDB" id="1E5L"/>
    </source>
</evidence>
<evidence type="ECO:0007744" key="4">
    <source>
        <dbReference type="PDB" id="1E5Q"/>
    </source>
</evidence>
<evidence type="ECO:0007744" key="5">
    <source>
        <dbReference type="PDB" id="1FF9"/>
    </source>
</evidence>
<evidence type="ECO:0007829" key="6">
    <source>
        <dbReference type="PDB" id="1E5Q"/>
    </source>
</evidence>
<evidence type="ECO:0007829" key="7">
    <source>
        <dbReference type="PDB" id="1FF9"/>
    </source>
</evidence>
<dbReference type="EC" id="1.5.1.10"/>
<dbReference type="EMBL" id="AF144424">
    <property type="protein sequence ID" value="AAF91081.1"/>
    <property type="molecule type" value="Genomic_DNA"/>
</dbReference>
<dbReference type="EMBL" id="CM001234">
    <property type="protein sequence ID" value="EHA49766.1"/>
    <property type="molecule type" value="Genomic_DNA"/>
</dbReference>
<dbReference type="RefSeq" id="XP_003716085.1">
    <property type="nucleotide sequence ID" value="XM_003716037.1"/>
</dbReference>
<dbReference type="PDB" id="1E5L">
    <property type="method" value="X-ray"/>
    <property type="resolution" value="2.40 A"/>
    <property type="chains" value="A/B=1-450"/>
</dbReference>
<dbReference type="PDB" id="1E5Q">
    <property type="method" value="X-ray"/>
    <property type="resolution" value="2.10 A"/>
    <property type="chains" value="A/B/C/D/E/F/G/H=1-450"/>
</dbReference>
<dbReference type="PDB" id="1FF9">
    <property type="method" value="X-ray"/>
    <property type="resolution" value="2.00 A"/>
    <property type="chains" value="A=1-450"/>
</dbReference>
<dbReference type="PDBsum" id="1E5L"/>
<dbReference type="PDBsum" id="1E5Q"/>
<dbReference type="PDBsum" id="1FF9"/>
<dbReference type="SMR" id="Q9P4R4"/>
<dbReference type="FunCoup" id="Q9P4R4">
    <property type="interactions" value="158"/>
</dbReference>
<dbReference type="STRING" id="242507.Q9P4R4"/>
<dbReference type="EnsemblFungi" id="MGG_17041T0">
    <property type="protein sequence ID" value="MGG_17041T0"/>
    <property type="gene ID" value="MGG_17041"/>
</dbReference>
<dbReference type="KEGG" id="mgr:MGG_17041"/>
<dbReference type="VEuPathDB" id="FungiDB:MGG_17041"/>
<dbReference type="eggNOG" id="KOG0172">
    <property type="taxonomic scope" value="Eukaryota"/>
</dbReference>
<dbReference type="HOGENOM" id="CLU_016207_3_1_1"/>
<dbReference type="InParanoid" id="Q9P4R4"/>
<dbReference type="OMA" id="WNYKFTW"/>
<dbReference type="OrthoDB" id="10059875at2759"/>
<dbReference type="BRENDA" id="1.5.1.10">
    <property type="organism ID" value="5238"/>
</dbReference>
<dbReference type="UniPathway" id="UPA00033">
    <property type="reaction ID" value="UER00033"/>
</dbReference>
<dbReference type="EvolutionaryTrace" id="Q9P4R4"/>
<dbReference type="Proteomes" id="UP000009058">
    <property type="component" value="Chromosome 4"/>
</dbReference>
<dbReference type="GO" id="GO:0005737">
    <property type="term" value="C:cytoplasm"/>
    <property type="evidence" value="ECO:0007669"/>
    <property type="project" value="TreeGrafter"/>
</dbReference>
<dbReference type="GO" id="GO:0004755">
    <property type="term" value="F:saccharopine dehydrogenase (NADP+, L-glutamate-forming) activity"/>
    <property type="evidence" value="ECO:0007669"/>
    <property type="project" value="UniProtKB-EC"/>
</dbReference>
<dbReference type="GO" id="GO:0019878">
    <property type="term" value="P:lysine biosynthetic process via aminoadipic acid"/>
    <property type="evidence" value="ECO:0007669"/>
    <property type="project" value="UniProtKB-UniPathway"/>
</dbReference>
<dbReference type="FunFam" id="3.30.360.10:FF:000008">
    <property type="entry name" value="Alpha-aminoadipic semialdehyde synthase, mitochondrial"/>
    <property type="match status" value="1"/>
</dbReference>
<dbReference type="FunFam" id="3.40.50.720:FF:000072">
    <property type="entry name" value="Saccharopine dehydrogenase [NADP(+), L-glutamate-forming]"/>
    <property type="match status" value="1"/>
</dbReference>
<dbReference type="FunFam" id="1.10.1870.10:FF:000002">
    <property type="entry name" value="Saccharopine dehydrogenase Lys9"/>
    <property type="match status" value="1"/>
</dbReference>
<dbReference type="Gene3D" id="3.30.360.10">
    <property type="entry name" value="Dihydrodipicolinate Reductase, domain 2"/>
    <property type="match status" value="1"/>
</dbReference>
<dbReference type="Gene3D" id="1.10.1870.10">
    <property type="entry name" value="Domain 3, Saccharopine reductase"/>
    <property type="match status" value="1"/>
</dbReference>
<dbReference type="Gene3D" id="3.40.50.720">
    <property type="entry name" value="NAD(P)-binding Rossmann-like Domain"/>
    <property type="match status" value="1"/>
</dbReference>
<dbReference type="InterPro" id="IPR051168">
    <property type="entry name" value="AASS"/>
</dbReference>
<dbReference type="InterPro" id="IPR036291">
    <property type="entry name" value="NAD(P)-bd_dom_sf"/>
</dbReference>
<dbReference type="InterPro" id="IPR032095">
    <property type="entry name" value="Sacchrp_dh-like_C"/>
</dbReference>
<dbReference type="InterPro" id="IPR005097">
    <property type="entry name" value="Sacchrp_dh_NADP-bd"/>
</dbReference>
<dbReference type="PANTHER" id="PTHR11133:SF22">
    <property type="entry name" value="ALPHA-AMINOADIPIC SEMIALDEHYDE SYNTHASE, MITOCHONDRIAL"/>
    <property type="match status" value="1"/>
</dbReference>
<dbReference type="PANTHER" id="PTHR11133">
    <property type="entry name" value="SACCHAROPINE DEHYDROGENASE"/>
    <property type="match status" value="1"/>
</dbReference>
<dbReference type="Pfam" id="PF16653">
    <property type="entry name" value="Sacchrp_dh_C"/>
    <property type="match status" value="1"/>
</dbReference>
<dbReference type="Pfam" id="PF03435">
    <property type="entry name" value="Sacchrp_dh_NADP"/>
    <property type="match status" value="1"/>
</dbReference>
<dbReference type="SUPFAM" id="SSF55347">
    <property type="entry name" value="Glyceraldehyde-3-phosphate dehydrogenase-like, C-terminal domain"/>
    <property type="match status" value="1"/>
</dbReference>
<dbReference type="SUPFAM" id="SSF51735">
    <property type="entry name" value="NAD(P)-binding Rossmann-fold domains"/>
    <property type="match status" value="1"/>
</dbReference>